<gene>
    <name evidence="1" type="primary">nadK</name>
    <name type="ordered locus">EcSMS35_2767</name>
</gene>
<proteinExistence type="inferred from homology"/>
<evidence type="ECO:0000255" key="1">
    <source>
        <dbReference type="HAMAP-Rule" id="MF_00361"/>
    </source>
</evidence>
<accession>B1LPC2</accession>
<keyword id="KW-0067">ATP-binding</keyword>
<keyword id="KW-0963">Cytoplasm</keyword>
<keyword id="KW-0418">Kinase</keyword>
<keyword id="KW-0520">NAD</keyword>
<keyword id="KW-0521">NADP</keyword>
<keyword id="KW-0547">Nucleotide-binding</keyword>
<keyword id="KW-0808">Transferase</keyword>
<organism>
    <name type="scientific">Escherichia coli (strain SMS-3-5 / SECEC)</name>
    <dbReference type="NCBI Taxonomy" id="439855"/>
    <lineage>
        <taxon>Bacteria</taxon>
        <taxon>Pseudomonadati</taxon>
        <taxon>Pseudomonadota</taxon>
        <taxon>Gammaproteobacteria</taxon>
        <taxon>Enterobacterales</taxon>
        <taxon>Enterobacteriaceae</taxon>
        <taxon>Escherichia</taxon>
    </lineage>
</organism>
<sequence length="292" mass="32536">MNNHFKCIGIVGHPRHPTALTTHEMLYRWLCAKGYEVIVEQQIAHELQLKNVKTGTLAEIGQLADLAVVVGGDGNMLGAARTLARYDIKVIGINRGNLGFLTDLDPDNAQQQLADVLEGHYISEKRFLLEAQVCQQDCQKRISTAINEVVLHPGKVAHMIEFEVYIDEIFAFSQRSDGLIISTPTGSTAYSLSAGGPILTPSLDAITLVPMFPHTLSARPLVINSSSTIRLRFSHRRNDLEISCDSQIALPIQEGEDVLIRRCDYHLNLIHPKDYSYFNTLSTKLGWSKKLF</sequence>
<reference key="1">
    <citation type="journal article" date="2008" name="J. Bacteriol.">
        <title>Insights into the environmental resistance gene pool from the genome sequence of the multidrug-resistant environmental isolate Escherichia coli SMS-3-5.</title>
        <authorList>
            <person name="Fricke W.F."/>
            <person name="Wright M.S."/>
            <person name="Lindell A.H."/>
            <person name="Harkins D.M."/>
            <person name="Baker-Austin C."/>
            <person name="Ravel J."/>
            <person name="Stepanauskas R."/>
        </authorList>
    </citation>
    <scope>NUCLEOTIDE SEQUENCE [LARGE SCALE GENOMIC DNA]</scope>
    <source>
        <strain>SMS-3-5 / SECEC</strain>
    </source>
</reference>
<protein>
    <recommendedName>
        <fullName evidence="1">NAD kinase</fullName>
        <ecNumber evidence="1">2.7.1.23</ecNumber>
    </recommendedName>
    <alternativeName>
        <fullName evidence="1">ATP-dependent NAD kinase</fullName>
    </alternativeName>
</protein>
<dbReference type="EC" id="2.7.1.23" evidence="1"/>
<dbReference type="EMBL" id="CP000970">
    <property type="protein sequence ID" value="ACB15776.1"/>
    <property type="molecule type" value="Genomic_DNA"/>
</dbReference>
<dbReference type="RefSeq" id="WP_001059146.1">
    <property type="nucleotide sequence ID" value="NC_010498.1"/>
</dbReference>
<dbReference type="SMR" id="B1LPC2"/>
<dbReference type="KEGG" id="ecm:EcSMS35_2767"/>
<dbReference type="HOGENOM" id="CLU_008831_0_1_6"/>
<dbReference type="Proteomes" id="UP000007011">
    <property type="component" value="Chromosome"/>
</dbReference>
<dbReference type="GO" id="GO:0005737">
    <property type="term" value="C:cytoplasm"/>
    <property type="evidence" value="ECO:0007669"/>
    <property type="project" value="UniProtKB-SubCell"/>
</dbReference>
<dbReference type="GO" id="GO:0005524">
    <property type="term" value="F:ATP binding"/>
    <property type="evidence" value="ECO:0007669"/>
    <property type="project" value="UniProtKB-KW"/>
</dbReference>
<dbReference type="GO" id="GO:0046872">
    <property type="term" value="F:metal ion binding"/>
    <property type="evidence" value="ECO:0007669"/>
    <property type="project" value="UniProtKB-UniRule"/>
</dbReference>
<dbReference type="GO" id="GO:0051287">
    <property type="term" value="F:NAD binding"/>
    <property type="evidence" value="ECO:0007669"/>
    <property type="project" value="UniProtKB-ARBA"/>
</dbReference>
<dbReference type="GO" id="GO:0003951">
    <property type="term" value="F:NAD+ kinase activity"/>
    <property type="evidence" value="ECO:0007669"/>
    <property type="project" value="UniProtKB-UniRule"/>
</dbReference>
<dbReference type="GO" id="GO:0019674">
    <property type="term" value="P:NAD metabolic process"/>
    <property type="evidence" value="ECO:0007669"/>
    <property type="project" value="InterPro"/>
</dbReference>
<dbReference type="GO" id="GO:0006741">
    <property type="term" value="P:NADP biosynthetic process"/>
    <property type="evidence" value="ECO:0007669"/>
    <property type="project" value="UniProtKB-UniRule"/>
</dbReference>
<dbReference type="FunFam" id="2.60.200.30:FF:000001">
    <property type="entry name" value="NAD kinase"/>
    <property type="match status" value="1"/>
</dbReference>
<dbReference type="FunFam" id="3.40.50.10330:FF:000004">
    <property type="entry name" value="NAD kinase"/>
    <property type="match status" value="1"/>
</dbReference>
<dbReference type="Gene3D" id="3.40.50.10330">
    <property type="entry name" value="Probable inorganic polyphosphate/atp-NAD kinase, domain 1"/>
    <property type="match status" value="1"/>
</dbReference>
<dbReference type="Gene3D" id="2.60.200.30">
    <property type="entry name" value="Probable inorganic polyphosphate/atp-NAD kinase, domain 2"/>
    <property type="match status" value="1"/>
</dbReference>
<dbReference type="HAMAP" id="MF_00361">
    <property type="entry name" value="NAD_kinase"/>
    <property type="match status" value="1"/>
</dbReference>
<dbReference type="InterPro" id="IPR017438">
    <property type="entry name" value="ATP-NAD_kinase_N"/>
</dbReference>
<dbReference type="InterPro" id="IPR017437">
    <property type="entry name" value="ATP-NAD_kinase_PpnK-typ_C"/>
</dbReference>
<dbReference type="InterPro" id="IPR016064">
    <property type="entry name" value="NAD/diacylglycerol_kinase_sf"/>
</dbReference>
<dbReference type="InterPro" id="IPR002504">
    <property type="entry name" value="NADK"/>
</dbReference>
<dbReference type="NCBIfam" id="NF002306">
    <property type="entry name" value="PRK01231.1"/>
    <property type="match status" value="1"/>
</dbReference>
<dbReference type="NCBIfam" id="NF002893">
    <property type="entry name" value="PRK03378.1"/>
    <property type="match status" value="1"/>
</dbReference>
<dbReference type="PANTHER" id="PTHR20275">
    <property type="entry name" value="NAD KINASE"/>
    <property type="match status" value="1"/>
</dbReference>
<dbReference type="PANTHER" id="PTHR20275:SF0">
    <property type="entry name" value="NAD KINASE"/>
    <property type="match status" value="1"/>
</dbReference>
<dbReference type="Pfam" id="PF01513">
    <property type="entry name" value="NAD_kinase"/>
    <property type="match status" value="1"/>
</dbReference>
<dbReference type="Pfam" id="PF20143">
    <property type="entry name" value="NAD_kinase_C"/>
    <property type="match status" value="1"/>
</dbReference>
<dbReference type="SUPFAM" id="SSF111331">
    <property type="entry name" value="NAD kinase/diacylglycerol kinase-like"/>
    <property type="match status" value="1"/>
</dbReference>
<name>NADK_ECOSM</name>
<comment type="function">
    <text evidence="1">Involved in the regulation of the intracellular balance of NAD and NADP, and is a key enzyme in the biosynthesis of NADP. Catalyzes specifically the phosphorylation on 2'-hydroxyl of the adenosine moiety of NAD to yield NADP.</text>
</comment>
<comment type="catalytic activity">
    <reaction evidence="1">
        <text>NAD(+) + ATP = ADP + NADP(+) + H(+)</text>
        <dbReference type="Rhea" id="RHEA:18629"/>
        <dbReference type="ChEBI" id="CHEBI:15378"/>
        <dbReference type="ChEBI" id="CHEBI:30616"/>
        <dbReference type="ChEBI" id="CHEBI:57540"/>
        <dbReference type="ChEBI" id="CHEBI:58349"/>
        <dbReference type="ChEBI" id="CHEBI:456216"/>
        <dbReference type="EC" id="2.7.1.23"/>
    </reaction>
</comment>
<comment type="cofactor">
    <cofactor evidence="1">
        <name>a divalent metal cation</name>
        <dbReference type="ChEBI" id="CHEBI:60240"/>
    </cofactor>
</comment>
<comment type="subcellular location">
    <subcellularLocation>
        <location evidence="1">Cytoplasm</location>
    </subcellularLocation>
</comment>
<comment type="similarity">
    <text evidence="1">Belongs to the NAD kinase family.</text>
</comment>
<feature type="chain" id="PRO_1000120859" description="NAD kinase">
    <location>
        <begin position="1"/>
        <end position="292"/>
    </location>
</feature>
<feature type="active site" description="Proton acceptor" evidence="1">
    <location>
        <position position="73"/>
    </location>
</feature>
<feature type="binding site" evidence="1">
    <location>
        <begin position="73"/>
        <end position="74"/>
    </location>
    <ligand>
        <name>NAD(+)</name>
        <dbReference type="ChEBI" id="CHEBI:57540"/>
    </ligand>
</feature>
<feature type="binding site" evidence="1">
    <location>
        <begin position="147"/>
        <end position="148"/>
    </location>
    <ligand>
        <name>NAD(+)</name>
        <dbReference type="ChEBI" id="CHEBI:57540"/>
    </ligand>
</feature>
<feature type="binding site" evidence="1">
    <location>
        <position position="158"/>
    </location>
    <ligand>
        <name>NAD(+)</name>
        <dbReference type="ChEBI" id="CHEBI:57540"/>
    </ligand>
</feature>
<feature type="binding site" evidence="1">
    <location>
        <position position="175"/>
    </location>
    <ligand>
        <name>NAD(+)</name>
        <dbReference type="ChEBI" id="CHEBI:57540"/>
    </ligand>
</feature>
<feature type="binding site" evidence="1">
    <location>
        <position position="177"/>
    </location>
    <ligand>
        <name>NAD(+)</name>
        <dbReference type="ChEBI" id="CHEBI:57540"/>
    </ligand>
</feature>
<feature type="binding site" evidence="1">
    <location>
        <begin position="188"/>
        <end position="193"/>
    </location>
    <ligand>
        <name>NAD(+)</name>
        <dbReference type="ChEBI" id="CHEBI:57540"/>
    </ligand>
</feature>
<feature type="binding site" evidence="1">
    <location>
        <position position="247"/>
    </location>
    <ligand>
        <name>NAD(+)</name>
        <dbReference type="ChEBI" id="CHEBI:57540"/>
    </ligand>
</feature>